<reference key="1">
    <citation type="journal article" date="2002" name="Nature">
        <title>The genome sequence and structure of rice chromosome 1.</title>
        <authorList>
            <person name="Sasaki T."/>
            <person name="Matsumoto T."/>
            <person name="Yamamoto K."/>
            <person name="Sakata K."/>
            <person name="Baba T."/>
            <person name="Katayose Y."/>
            <person name="Wu J."/>
            <person name="Niimura Y."/>
            <person name="Cheng Z."/>
            <person name="Nagamura Y."/>
            <person name="Antonio B.A."/>
            <person name="Kanamori H."/>
            <person name="Hosokawa S."/>
            <person name="Masukawa M."/>
            <person name="Arikawa K."/>
            <person name="Chiden Y."/>
            <person name="Hayashi M."/>
            <person name="Okamoto M."/>
            <person name="Ando T."/>
            <person name="Aoki H."/>
            <person name="Arita K."/>
            <person name="Hamada M."/>
            <person name="Harada C."/>
            <person name="Hijishita S."/>
            <person name="Honda M."/>
            <person name="Ichikawa Y."/>
            <person name="Idonuma A."/>
            <person name="Iijima M."/>
            <person name="Ikeda M."/>
            <person name="Ikeno M."/>
            <person name="Ito S."/>
            <person name="Ito T."/>
            <person name="Ito Y."/>
            <person name="Ito Y."/>
            <person name="Iwabuchi A."/>
            <person name="Kamiya K."/>
            <person name="Karasawa W."/>
            <person name="Katagiri S."/>
            <person name="Kikuta A."/>
            <person name="Kobayashi N."/>
            <person name="Kono I."/>
            <person name="Machita K."/>
            <person name="Maehara T."/>
            <person name="Mizuno H."/>
            <person name="Mizubayashi T."/>
            <person name="Mukai Y."/>
            <person name="Nagasaki H."/>
            <person name="Nakashima M."/>
            <person name="Nakama Y."/>
            <person name="Nakamichi Y."/>
            <person name="Nakamura M."/>
            <person name="Namiki N."/>
            <person name="Negishi M."/>
            <person name="Ohta I."/>
            <person name="Ono N."/>
            <person name="Saji S."/>
            <person name="Sakai K."/>
            <person name="Shibata M."/>
            <person name="Shimokawa T."/>
            <person name="Shomura A."/>
            <person name="Song J."/>
            <person name="Takazaki Y."/>
            <person name="Terasawa K."/>
            <person name="Tsuji K."/>
            <person name="Waki K."/>
            <person name="Yamagata H."/>
            <person name="Yamane H."/>
            <person name="Yoshiki S."/>
            <person name="Yoshihara R."/>
            <person name="Yukawa K."/>
            <person name="Zhong H."/>
            <person name="Iwama H."/>
            <person name="Endo T."/>
            <person name="Ito H."/>
            <person name="Hahn J.H."/>
            <person name="Kim H.-I."/>
            <person name="Eun M.-Y."/>
            <person name="Yano M."/>
            <person name="Jiang J."/>
            <person name="Gojobori T."/>
        </authorList>
    </citation>
    <scope>NUCLEOTIDE SEQUENCE [LARGE SCALE GENOMIC DNA]</scope>
    <source>
        <strain>cv. Nipponbare</strain>
    </source>
</reference>
<reference key="2">
    <citation type="journal article" date="2005" name="Nature">
        <title>The map-based sequence of the rice genome.</title>
        <authorList>
            <consortium name="International rice genome sequencing project (IRGSP)"/>
        </authorList>
    </citation>
    <scope>NUCLEOTIDE SEQUENCE [LARGE SCALE GENOMIC DNA]</scope>
    <source>
        <strain>cv. Nipponbare</strain>
    </source>
</reference>
<reference key="3">
    <citation type="journal article" date="2008" name="Nucleic Acids Res.">
        <title>The rice annotation project database (RAP-DB): 2008 update.</title>
        <authorList>
            <consortium name="The rice annotation project (RAP)"/>
        </authorList>
    </citation>
    <scope>GENOME REANNOTATION</scope>
    <source>
        <strain>cv. Nipponbare</strain>
    </source>
</reference>
<reference key="4">
    <citation type="journal article" date="2013" name="Rice">
        <title>Improvement of the Oryza sativa Nipponbare reference genome using next generation sequence and optical map data.</title>
        <authorList>
            <person name="Kawahara Y."/>
            <person name="de la Bastide M."/>
            <person name="Hamilton J.P."/>
            <person name="Kanamori H."/>
            <person name="McCombie W.R."/>
            <person name="Ouyang S."/>
            <person name="Schwartz D.C."/>
            <person name="Tanaka T."/>
            <person name="Wu J."/>
            <person name="Zhou S."/>
            <person name="Childs K.L."/>
            <person name="Davidson R.M."/>
            <person name="Lin H."/>
            <person name="Quesada-Ocampo L."/>
            <person name="Vaillancourt B."/>
            <person name="Sakai H."/>
            <person name="Lee S.S."/>
            <person name="Kim J."/>
            <person name="Numa H."/>
            <person name="Itoh T."/>
            <person name="Buell C.R."/>
            <person name="Matsumoto T."/>
        </authorList>
    </citation>
    <scope>GENOME REANNOTATION</scope>
    <source>
        <strain>cv. Nipponbare</strain>
    </source>
</reference>
<reference key="5">
    <citation type="journal article" date="2005" name="PLoS Biol.">
        <title>The genomes of Oryza sativa: a history of duplications.</title>
        <authorList>
            <person name="Yu J."/>
            <person name="Wang J."/>
            <person name="Lin W."/>
            <person name="Li S."/>
            <person name="Li H."/>
            <person name="Zhou J."/>
            <person name="Ni P."/>
            <person name="Dong W."/>
            <person name="Hu S."/>
            <person name="Zeng C."/>
            <person name="Zhang J."/>
            <person name="Zhang Y."/>
            <person name="Li R."/>
            <person name="Xu Z."/>
            <person name="Li S."/>
            <person name="Li X."/>
            <person name="Zheng H."/>
            <person name="Cong L."/>
            <person name="Lin L."/>
            <person name="Yin J."/>
            <person name="Geng J."/>
            <person name="Li G."/>
            <person name="Shi J."/>
            <person name="Liu J."/>
            <person name="Lv H."/>
            <person name="Li J."/>
            <person name="Wang J."/>
            <person name="Deng Y."/>
            <person name="Ran L."/>
            <person name="Shi X."/>
            <person name="Wang X."/>
            <person name="Wu Q."/>
            <person name="Li C."/>
            <person name="Ren X."/>
            <person name="Wang J."/>
            <person name="Wang X."/>
            <person name="Li D."/>
            <person name="Liu D."/>
            <person name="Zhang X."/>
            <person name="Ji Z."/>
            <person name="Zhao W."/>
            <person name="Sun Y."/>
            <person name="Zhang Z."/>
            <person name="Bao J."/>
            <person name="Han Y."/>
            <person name="Dong L."/>
            <person name="Ji J."/>
            <person name="Chen P."/>
            <person name="Wu S."/>
            <person name="Liu J."/>
            <person name="Xiao Y."/>
            <person name="Bu D."/>
            <person name="Tan J."/>
            <person name="Yang L."/>
            <person name="Ye C."/>
            <person name="Zhang J."/>
            <person name="Xu J."/>
            <person name="Zhou Y."/>
            <person name="Yu Y."/>
            <person name="Zhang B."/>
            <person name="Zhuang S."/>
            <person name="Wei H."/>
            <person name="Liu B."/>
            <person name="Lei M."/>
            <person name="Yu H."/>
            <person name="Li Y."/>
            <person name="Xu H."/>
            <person name="Wei S."/>
            <person name="He X."/>
            <person name="Fang L."/>
            <person name="Zhang Z."/>
            <person name="Zhang Y."/>
            <person name="Huang X."/>
            <person name="Su Z."/>
            <person name="Tong W."/>
            <person name="Li J."/>
            <person name="Tong Z."/>
            <person name="Li S."/>
            <person name="Ye J."/>
            <person name="Wang L."/>
            <person name="Fang L."/>
            <person name="Lei T."/>
            <person name="Chen C.-S."/>
            <person name="Chen H.-C."/>
            <person name="Xu Z."/>
            <person name="Li H."/>
            <person name="Huang H."/>
            <person name="Zhang F."/>
            <person name="Xu H."/>
            <person name="Li N."/>
            <person name="Zhao C."/>
            <person name="Li S."/>
            <person name="Dong L."/>
            <person name="Huang Y."/>
            <person name="Li L."/>
            <person name="Xi Y."/>
            <person name="Qi Q."/>
            <person name="Li W."/>
            <person name="Zhang B."/>
            <person name="Hu W."/>
            <person name="Zhang Y."/>
            <person name="Tian X."/>
            <person name="Jiao Y."/>
            <person name="Liang X."/>
            <person name="Jin J."/>
            <person name="Gao L."/>
            <person name="Zheng W."/>
            <person name="Hao B."/>
            <person name="Liu S.-M."/>
            <person name="Wang W."/>
            <person name="Yuan L."/>
            <person name="Cao M."/>
            <person name="McDermott J."/>
            <person name="Samudrala R."/>
            <person name="Wang J."/>
            <person name="Wong G.K.-S."/>
            <person name="Yang H."/>
        </authorList>
    </citation>
    <scope>NUCLEOTIDE SEQUENCE [LARGE SCALE GENOMIC DNA]</scope>
    <source>
        <strain>cv. Nipponbare</strain>
    </source>
</reference>
<reference key="6">
    <citation type="journal article" date="2003" name="Science">
        <title>Collection, mapping, and annotation of over 28,000 cDNA clones from japonica rice.</title>
        <authorList>
            <consortium name="The rice full-length cDNA consortium"/>
        </authorList>
    </citation>
    <scope>NUCLEOTIDE SEQUENCE [LARGE SCALE MRNA]</scope>
    <source>
        <strain>cv. Nipponbare</strain>
    </source>
</reference>
<reference key="7">
    <citation type="journal article" date="2008" name="Plant Physiol.">
        <title>Genomic survey and gene expression analysis of the basic leucine zipper transcription factor family in rice.</title>
        <authorList>
            <person name="Nijhawan A."/>
            <person name="Jain M."/>
            <person name="Tyagi A.K."/>
            <person name="Khurana J.P."/>
        </authorList>
    </citation>
    <scope>TISSUE SPECIFICITY</scope>
    <scope>GENE FAMILY</scope>
    <scope>NOMENCLATURE</scope>
</reference>
<comment type="function">
    <text evidence="1">Transcription regulator.</text>
</comment>
<comment type="subcellular location">
    <subcellularLocation>
        <location evidence="2">Nucleus</location>
    </subcellularLocation>
</comment>
<comment type="tissue specificity">
    <text evidence="4">Expressed in roots, shoots and panicles.</text>
</comment>
<comment type="sequence caution" evidence="5">
    <conflict type="erroneous termination">
        <sequence resource="EMBL" id="AK108553"/>
    </conflict>
    <text>Truncated C-terminus.</text>
</comment>
<name>BZP06_ORYSJ</name>
<gene>
    <name type="primary">BZIP06</name>
    <name type="ordered locus">Os01g0756200</name>
    <name type="ordered locus">LOC_Os01g55150</name>
    <name type="ORF">OsJ_03500</name>
    <name type="ORF">P0503C12.45</name>
</gene>
<dbReference type="EMBL" id="AP003268">
    <property type="protein sequence ID" value="BAD87301.1"/>
    <property type="molecule type" value="Genomic_DNA"/>
</dbReference>
<dbReference type="EMBL" id="AP008207">
    <property type="protein sequence ID" value="BAF06200.1"/>
    <property type="molecule type" value="Genomic_DNA"/>
</dbReference>
<dbReference type="EMBL" id="AP014957">
    <property type="protein sequence ID" value="BAS74407.1"/>
    <property type="molecule type" value="Genomic_DNA"/>
</dbReference>
<dbReference type="EMBL" id="CM000138">
    <property type="protein sequence ID" value="EEE55401.1"/>
    <property type="molecule type" value="Genomic_DNA"/>
</dbReference>
<dbReference type="EMBL" id="AK108553">
    <property type="status" value="NOT_ANNOTATED_CDS"/>
    <property type="molecule type" value="mRNA"/>
</dbReference>
<dbReference type="RefSeq" id="XP_015634100.1">
    <property type="nucleotide sequence ID" value="XM_015778614.1"/>
</dbReference>
<dbReference type="SMR" id="Q5JMK6"/>
<dbReference type="FunCoup" id="Q5JMK6">
    <property type="interactions" value="13"/>
</dbReference>
<dbReference type="STRING" id="39947.Q5JMK6"/>
<dbReference type="PaxDb" id="39947-Q5JMK6"/>
<dbReference type="EnsemblPlants" id="Os01t0756200-01">
    <property type="protein sequence ID" value="Os01t0756200-01"/>
    <property type="gene ID" value="Os01g0756200"/>
</dbReference>
<dbReference type="Gramene" id="Os01t0756200-01">
    <property type="protein sequence ID" value="Os01t0756200-01"/>
    <property type="gene ID" value="Os01g0756200"/>
</dbReference>
<dbReference type="KEGG" id="dosa:Os01g0756200"/>
<dbReference type="eggNOG" id="ENOG502QQW5">
    <property type="taxonomic scope" value="Eukaryota"/>
</dbReference>
<dbReference type="HOGENOM" id="CLU_059253_1_1_1"/>
<dbReference type="InParanoid" id="Q5JMK6"/>
<dbReference type="OMA" id="PTAVHHW"/>
<dbReference type="OrthoDB" id="1435597at2759"/>
<dbReference type="Proteomes" id="UP000000763">
    <property type="component" value="Chromosome 1"/>
</dbReference>
<dbReference type="Proteomes" id="UP000007752">
    <property type="component" value="Chromosome 1"/>
</dbReference>
<dbReference type="Proteomes" id="UP000059680">
    <property type="component" value="Chromosome 1"/>
</dbReference>
<dbReference type="GO" id="GO:0005634">
    <property type="term" value="C:nucleus"/>
    <property type="evidence" value="ECO:0000318"/>
    <property type="project" value="GO_Central"/>
</dbReference>
<dbReference type="GO" id="GO:0003677">
    <property type="term" value="F:DNA binding"/>
    <property type="evidence" value="ECO:0000318"/>
    <property type="project" value="GO_Central"/>
</dbReference>
<dbReference type="GO" id="GO:0003700">
    <property type="term" value="F:DNA-binding transcription factor activity"/>
    <property type="evidence" value="ECO:0007669"/>
    <property type="project" value="InterPro"/>
</dbReference>
<dbReference type="GO" id="GO:0045893">
    <property type="term" value="P:positive regulation of DNA-templated transcription"/>
    <property type="evidence" value="ECO:0000318"/>
    <property type="project" value="GO_Central"/>
</dbReference>
<dbReference type="CDD" id="cd14703">
    <property type="entry name" value="bZIP_plant_RF2"/>
    <property type="match status" value="1"/>
</dbReference>
<dbReference type="FunFam" id="1.20.5.170:FF:000057">
    <property type="entry name" value="Basic leucine zipper 61"/>
    <property type="match status" value="1"/>
</dbReference>
<dbReference type="Gene3D" id="1.20.5.170">
    <property type="match status" value="1"/>
</dbReference>
<dbReference type="InterPro" id="IPR004827">
    <property type="entry name" value="bZIP"/>
</dbReference>
<dbReference type="InterPro" id="IPR044759">
    <property type="entry name" value="bZIP_RF2"/>
</dbReference>
<dbReference type="InterPro" id="IPR046347">
    <property type="entry name" value="bZIP_sf"/>
</dbReference>
<dbReference type="InterPro" id="IPR052483">
    <property type="entry name" value="bZIP_transcription_regulators"/>
</dbReference>
<dbReference type="PANTHER" id="PTHR46391">
    <property type="entry name" value="BASIC LEUCINE ZIPPER 34"/>
    <property type="match status" value="1"/>
</dbReference>
<dbReference type="PANTHER" id="PTHR46391:SF2">
    <property type="entry name" value="BASIC LEUCINE ZIPPER 6"/>
    <property type="match status" value="1"/>
</dbReference>
<dbReference type="Pfam" id="PF00170">
    <property type="entry name" value="bZIP_1"/>
    <property type="match status" value="1"/>
</dbReference>
<dbReference type="SMART" id="SM00338">
    <property type="entry name" value="BRLZ"/>
    <property type="match status" value="1"/>
</dbReference>
<dbReference type="SUPFAM" id="SSF57959">
    <property type="entry name" value="Leucine zipper domain"/>
    <property type="match status" value="1"/>
</dbReference>
<dbReference type="PROSITE" id="PS50217">
    <property type="entry name" value="BZIP"/>
    <property type="match status" value="1"/>
</dbReference>
<dbReference type="PROSITE" id="PS00036">
    <property type="entry name" value="BZIP_BASIC"/>
    <property type="match status" value="1"/>
</dbReference>
<proteinExistence type="evidence at transcript level"/>
<evidence type="ECO:0000250" key="1"/>
<evidence type="ECO:0000255" key="2">
    <source>
        <dbReference type="PROSITE-ProRule" id="PRU00978"/>
    </source>
</evidence>
<evidence type="ECO:0000256" key="3">
    <source>
        <dbReference type="SAM" id="MobiDB-lite"/>
    </source>
</evidence>
<evidence type="ECO:0000269" key="4">
    <source>
    </source>
</evidence>
<evidence type="ECO:0000305" key="5"/>
<accession>Q5JMK6</accession>
<accession>A0A0P0V8A6</accession>
<feature type="chain" id="PRO_0000430356" description="Basic leucine zipper 6">
    <location>
        <begin position="1"/>
        <end position="265"/>
    </location>
</feature>
<feature type="domain" description="bZIP" evidence="2">
    <location>
        <begin position="137"/>
        <end position="189"/>
    </location>
</feature>
<feature type="region of interest" description="Disordered" evidence="3">
    <location>
        <begin position="1"/>
        <end position="24"/>
    </location>
</feature>
<feature type="region of interest" description="Disordered" evidence="3">
    <location>
        <begin position="77"/>
        <end position="139"/>
    </location>
</feature>
<feature type="region of interest" description="Basic motif" evidence="2">
    <location>
        <begin position="139"/>
        <end position="158"/>
    </location>
</feature>
<feature type="region of interest" description="Leucine-zipper" evidence="2">
    <location>
        <begin position="165"/>
        <end position="186"/>
    </location>
</feature>
<feature type="region of interest" description="Disordered" evidence="3">
    <location>
        <begin position="239"/>
        <end position="265"/>
    </location>
</feature>
<feature type="compositionally biased region" description="Low complexity" evidence="3">
    <location>
        <begin position="85"/>
        <end position="97"/>
    </location>
</feature>
<feature type="compositionally biased region" description="Polar residues" evidence="3">
    <location>
        <begin position="122"/>
        <end position="132"/>
    </location>
</feature>
<keyword id="KW-0238">DNA-binding</keyword>
<keyword id="KW-0539">Nucleus</keyword>
<keyword id="KW-1185">Reference proteome</keyword>
<keyword id="KW-0804">Transcription</keyword>
<keyword id="KW-0805">Transcription regulation</keyword>
<sequence>MAQLPPKIPVAAPGHHQHWASAGGAGDAAWADEFAEFAASRRGAHRRSLSDSVAFVEVAPAGCGAGGEFDRLDDDQLMSMFPDEGGSSAPGSDNGGSDSDGGGDKHAAAQSDDGQHAAGEPTQEQAAATSPTELIRDPKRVKRILANRQSAQRSRVRKLQYISELERSVTTLQNEVSVLSPRVAFLDQQRTILTVGNSHLKQRIAALAQDKIFKDAHQEALRKEIERLRQVYQQQNTKLSGGLAADHAHVHGGPPPVRAEKELMS</sequence>
<protein>
    <recommendedName>
        <fullName>Basic leucine zipper 6</fullName>
        <shortName>OsbZIP06</shortName>
        <shortName>bZIP protein 6</shortName>
    </recommendedName>
</protein>
<organism>
    <name type="scientific">Oryza sativa subsp. japonica</name>
    <name type="common">Rice</name>
    <dbReference type="NCBI Taxonomy" id="39947"/>
    <lineage>
        <taxon>Eukaryota</taxon>
        <taxon>Viridiplantae</taxon>
        <taxon>Streptophyta</taxon>
        <taxon>Embryophyta</taxon>
        <taxon>Tracheophyta</taxon>
        <taxon>Spermatophyta</taxon>
        <taxon>Magnoliopsida</taxon>
        <taxon>Liliopsida</taxon>
        <taxon>Poales</taxon>
        <taxon>Poaceae</taxon>
        <taxon>BOP clade</taxon>
        <taxon>Oryzoideae</taxon>
        <taxon>Oryzeae</taxon>
        <taxon>Oryzinae</taxon>
        <taxon>Oryza</taxon>
        <taxon>Oryza sativa</taxon>
    </lineage>
</organism>